<organismHost>
    <name type="scientific">Acanthamoeba polyphaga</name>
    <name type="common">Amoeba</name>
    <dbReference type="NCBI Taxonomy" id="5757"/>
</organismHost>
<organism>
    <name type="scientific">Acanthamoeba polyphaga mimivirus</name>
    <name type="common">APMV</name>
    <dbReference type="NCBI Taxonomy" id="212035"/>
    <lineage>
        <taxon>Viruses</taxon>
        <taxon>Varidnaviria</taxon>
        <taxon>Bamfordvirae</taxon>
        <taxon>Nucleocytoviricota</taxon>
        <taxon>Megaviricetes</taxon>
        <taxon>Imitervirales</taxon>
        <taxon>Mimiviridae</taxon>
        <taxon>Megamimivirinae</taxon>
        <taxon>Mimivirus</taxon>
        <taxon>Mimivirus bradfordmassiliense</taxon>
    </lineage>
</organism>
<proteinExistence type="inferred from homology"/>
<name>YL176_MIMIV</name>
<reference key="1">
    <citation type="journal article" date="2004" name="Science">
        <title>The 1.2-megabase genome sequence of Mimivirus.</title>
        <authorList>
            <person name="Raoult D."/>
            <person name="Audic S."/>
            <person name="Robert C."/>
            <person name="Abergel C."/>
            <person name="Renesto P."/>
            <person name="Ogata H."/>
            <person name="La Scola B."/>
            <person name="Susan M."/>
            <person name="Claverie J.-M."/>
        </authorList>
    </citation>
    <scope>NUCLEOTIDE SEQUENCE [LARGE SCALE GENOMIC DNA]</scope>
    <source>
        <strain>Rowbotham-Bradford</strain>
    </source>
</reference>
<keyword id="KW-1185">Reference proteome</keyword>
<sequence length="378" mass="44329">MGDFVFCYGSHNRKLFSKYIVSTKNSHKFYFGKKQYIDIEIETIFSQKYIVVDFNDSLDFLNFIVDNEIYCNFTNNKHECESLEFHHNYLNYITQHKHLDIVKIFYKKFVPLIKSGRGVQSLQFCILQDIDPEVVKCVFKNGSLEDTKDFIINEFHKNPDITIEFMDEIISIYKHKLTKLFMENKIDKSIDNMEISLFQFLIPALKKDDVGLFNFIIEEICNLTSEIDKTKLDKTQLGYLESIDIDFGIRDINTLIDYYMLCDFDDCSPEDEMYFCPNIFRQLIFSLDNLDSLAGRILFDIPEYNVVEYVGIICDFIGETNPLLINKMLPEAKSTEMAQLLIDCGADYEKLYESKKFSKCNSCVKKLIKELIKETSDS</sequence>
<protein>
    <recommendedName>
        <fullName>Uncharacterized protein L176</fullName>
    </recommendedName>
</protein>
<feature type="chain" id="PRO_0000071232" description="Uncharacterized protein L176">
    <location>
        <begin position="1"/>
        <end position="378"/>
    </location>
</feature>
<evidence type="ECO:0000305" key="1"/>
<gene>
    <name type="ordered locus">MIMI_L176</name>
</gene>
<comment type="similarity">
    <text evidence="1">Belongs to the mimivirus L17x/L18x family.</text>
</comment>
<accession>Q5UPN9</accession>
<dbReference type="EMBL" id="AY653733">
    <property type="protein sequence ID" value="AAV50450.1"/>
    <property type="molecule type" value="Genomic_DNA"/>
</dbReference>
<dbReference type="Proteomes" id="UP000001134">
    <property type="component" value="Genome"/>
</dbReference>